<protein>
    <recommendedName>
        <fullName>Potassium transport protein 2</fullName>
    </recommendedName>
</protein>
<sequence length="880" mass="99848">MQLSGFSTNGSGSLNTIVCEKLLFKPNFVQDSFIIGMTILCSVILYGSGNLRYIDALLLASGSCTQTGLQPVDLTQISIYQQLTILLFGVLSTPITVNLGLTLFKLYFYNKRYDMVITNNKLRMTYTYHTVRRRDTPEPSKVGNRKIRVLLDQGNQMHRPVAPETKAEEAEHQENEKHHRHHFRLRKFANAIDRPSFFRGNTMPALPSYAGVRNSQENEDRTEALSPALGKRRMASIDNGSLSVVQNNARNNPVDFYIPSSFEESSFQTIPEDFEPQVHDHENQTQLNHHLDNNSSISSHNPSLETANDGNQETVSSSNSNYSTTRVDNDPHVASYSPQNSNFDHQAAATTNDAHQNVVRGSAITIAPTPVPRHNRRPIYFADDTNGAEQEKGAHRLDGRGRKRGKSFAVTPTLHRNERSMSVLPFQLAKSFTSALPRRLTFNRTHTKASTMSLPYLSYNATVGRNSAFYALTPVEREELAGIEYESLRILTVILVVYFLFWHILGLVAFLIFIYTAKTSGRVVTDGGINRGWWAAFTSSSLFDNLGYSLNSDSLNSFQKAIFPQVLGTILIFLGNTFFPIMLRFIIWIMIRTTRFSPNFQQALYFLFEHPRRSFTLLFPSKTTWVLFLNLTLLNFASFFFFMVLDLGNSYVDKIPVGYRIMNAIFQNAATRSAGFTVVDLSQIAPAVMVTYMFMMYISAYPIAMSIRQTNVYEERSLGIYAADTENDDDNNINNNNNDNNTPKRKNFLMDHIQRQLSHDLWYLFLGYFIITIVEGRRLESEAEPQFTLFAILFEVISGYGTVGLSLGYKNDPSLTAQFRKISKLVMVALQIRGRHRGLPSALDRAVLMPSDKNFDREEEDYMRRHGKKNTNRADPVPSS</sequence>
<evidence type="ECO:0000255" key="1"/>
<evidence type="ECO:0000256" key="2">
    <source>
        <dbReference type="SAM" id="MobiDB-lite"/>
    </source>
</evidence>
<evidence type="ECO:0000269" key="3">
    <source>
    </source>
</evidence>
<evidence type="ECO:0000305" key="4"/>
<feature type="chain" id="PRO_0000070463" description="Potassium transport protein 2">
    <location>
        <begin position="1"/>
        <end position="880"/>
    </location>
</feature>
<feature type="transmembrane region" description="Helical" evidence="1">
    <location>
        <begin position="28"/>
        <end position="48"/>
    </location>
</feature>
<feature type="transmembrane region" description="Helical" evidence="1">
    <location>
        <begin position="84"/>
        <end position="104"/>
    </location>
</feature>
<feature type="transmembrane region" description="Helical" evidence="1">
    <location>
        <begin position="494"/>
        <end position="514"/>
    </location>
</feature>
<feature type="transmembrane region" description="Helical" evidence="1">
    <location>
        <begin position="571"/>
        <end position="591"/>
    </location>
</feature>
<feature type="transmembrane region" description="Helical" evidence="1">
    <location>
        <begin position="625"/>
        <end position="645"/>
    </location>
</feature>
<feature type="transmembrane region" description="Helical" evidence="1">
    <location>
        <begin position="684"/>
        <end position="704"/>
    </location>
</feature>
<feature type="transmembrane region" description="Helical" evidence="1">
    <location>
        <begin position="756"/>
        <end position="776"/>
    </location>
</feature>
<feature type="transmembrane region" description="Helical" evidence="1">
    <location>
        <begin position="787"/>
        <end position="807"/>
    </location>
</feature>
<feature type="region of interest" description="Disordered" evidence="2">
    <location>
        <begin position="157"/>
        <end position="182"/>
    </location>
</feature>
<feature type="region of interest" description="Disordered" evidence="2">
    <location>
        <begin position="289"/>
        <end position="344"/>
    </location>
</feature>
<feature type="region of interest" description="Disordered" evidence="2">
    <location>
        <begin position="857"/>
        <end position="880"/>
    </location>
</feature>
<feature type="compositionally biased region" description="Basic and acidic residues" evidence="2">
    <location>
        <begin position="165"/>
        <end position="177"/>
    </location>
</feature>
<feature type="compositionally biased region" description="Polar residues" evidence="2">
    <location>
        <begin position="289"/>
        <end position="315"/>
    </location>
</feature>
<feature type="compositionally biased region" description="Low complexity" evidence="2">
    <location>
        <begin position="316"/>
        <end position="325"/>
    </location>
</feature>
<feature type="glycosylation site" description="N-linked (GlcNAc...) asparagine" evidence="1">
    <location>
        <position position="9"/>
    </location>
</feature>
<feature type="glycosylation site" description="N-linked (GlcNAc...) asparagine" evidence="1">
    <location>
        <position position="239"/>
    </location>
</feature>
<feature type="glycosylation site" description="N-linked (GlcNAc...) asparagine" evidence="1">
    <location>
        <position position="283"/>
    </location>
</feature>
<feature type="glycosylation site" description="N-linked (GlcNAc...) asparagine" evidence="1">
    <location>
        <position position="293"/>
    </location>
</feature>
<feature type="glycosylation site" description="N-linked (GlcNAc...) asparagine" evidence="1">
    <location>
        <position position="294"/>
    </location>
</feature>
<feature type="glycosylation site" description="N-linked (GlcNAc...) asparagine" evidence="1">
    <location>
        <position position="321"/>
    </location>
</feature>
<feature type="glycosylation site" description="N-linked (GlcNAc...) asparagine" evidence="1">
    <location>
        <position position="443"/>
    </location>
</feature>
<feature type="glycosylation site" description="N-linked (GlcNAc...) asparagine" evidence="1">
    <location>
        <position position="460"/>
    </location>
</feature>
<proteinExistence type="evidence at transcript level"/>
<keyword id="KW-1003">Cell membrane</keyword>
<keyword id="KW-0325">Glycoprotein</keyword>
<keyword id="KW-0406">Ion transport</keyword>
<keyword id="KW-0472">Membrane</keyword>
<keyword id="KW-0630">Potassium</keyword>
<keyword id="KW-0633">Potassium transport</keyword>
<keyword id="KW-1185">Reference proteome</keyword>
<keyword id="KW-0812">Transmembrane</keyword>
<keyword id="KW-1133">Transmembrane helix</keyword>
<keyword id="KW-0813">Transport</keyword>
<comment type="function">
    <text evidence="3">Together with TRK1, defines the major, high-affinity potassium influx transport system. Involved in maintenance of the proper sodium/potassium ratio in the cell and in regulating the plasma membrane potential.</text>
</comment>
<comment type="subcellular location">
    <subcellularLocation>
        <location evidence="4">Cell membrane</location>
        <topology evidence="4">Multi-pass membrane protein</topology>
    </subcellularLocation>
</comment>
<comment type="similarity">
    <text evidence="4">Belongs to the TrkH potassium transport family.</text>
</comment>
<comment type="sequence caution" evidence="4">
    <conflict type="erroneous gene model prediction">
        <sequence resource="EMBL-CDS" id="CAB55290"/>
    </conflict>
</comment>
<name>TRK2_SCHPO</name>
<organism>
    <name type="scientific">Schizosaccharomyces pombe (strain 972 / ATCC 24843)</name>
    <name type="common">Fission yeast</name>
    <dbReference type="NCBI Taxonomy" id="284812"/>
    <lineage>
        <taxon>Eukaryota</taxon>
        <taxon>Fungi</taxon>
        <taxon>Dikarya</taxon>
        <taxon>Ascomycota</taxon>
        <taxon>Taphrinomycotina</taxon>
        <taxon>Schizosaccharomycetes</taxon>
        <taxon>Schizosaccharomycetales</taxon>
        <taxon>Schizosaccharomycetaceae</taxon>
        <taxon>Schizosaccharomyces</taxon>
    </lineage>
</organism>
<accession>Q10065</accession>
<accession>Q9UTH7</accession>
<reference key="1">
    <citation type="submission" date="2000-05" db="EMBL/GenBank/DDBJ databases">
        <title>Comparative physiology of potassium transport in Schizosaccharomyces pombe and Saccharomyces cerevisiae.</title>
        <authorList>
            <person name="Lichtenberg H."/>
            <person name="Martinez P."/>
            <person name="Ljungdahl P."/>
            <person name="Luehring H."/>
        </authorList>
    </citation>
    <scope>NUCLEOTIDE SEQUENCE [MRNA]</scope>
</reference>
<reference key="2">
    <citation type="journal article" date="2002" name="Nature">
        <title>The genome sequence of Schizosaccharomyces pombe.</title>
        <authorList>
            <person name="Wood V."/>
            <person name="Gwilliam R."/>
            <person name="Rajandream M.A."/>
            <person name="Lyne M.H."/>
            <person name="Lyne R."/>
            <person name="Stewart A."/>
            <person name="Sgouros J.G."/>
            <person name="Peat N."/>
            <person name="Hayles J."/>
            <person name="Baker S.G."/>
            <person name="Basham D."/>
            <person name="Bowman S."/>
            <person name="Brooks K."/>
            <person name="Brown D."/>
            <person name="Brown S."/>
            <person name="Chillingworth T."/>
            <person name="Churcher C.M."/>
            <person name="Collins M."/>
            <person name="Connor R."/>
            <person name="Cronin A."/>
            <person name="Davis P."/>
            <person name="Feltwell T."/>
            <person name="Fraser A."/>
            <person name="Gentles S."/>
            <person name="Goble A."/>
            <person name="Hamlin N."/>
            <person name="Harris D.E."/>
            <person name="Hidalgo J."/>
            <person name="Hodgson G."/>
            <person name="Holroyd S."/>
            <person name="Hornsby T."/>
            <person name="Howarth S."/>
            <person name="Huckle E.J."/>
            <person name="Hunt S."/>
            <person name="Jagels K."/>
            <person name="James K.D."/>
            <person name="Jones L."/>
            <person name="Jones M."/>
            <person name="Leather S."/>
            <person name="McDonald S."/>
            <person name="McLean J."/>
            <person name="Mooney P."/>
            <person name="Moule S."/>
            <person name="Mungall K.L."/>
            <person name="Murphy L.D."/>
            <person name="Niblett D."/>
            <person name="Odell C."/>
            <person name="Oliver K."/>
            <person name="O'Neil S."/>
            <person name="Pearson D."/>
            <person name="Quail M.A."/>
            <person name="Rabbinowitsch E."/>
            <person name="Rutherford K.M."/>
            <person name="Rutter S."/>
            <person name="Saunders D."/>
            <person name="Seeger K."/>
            <person name="Sharp S."/>
            <person name="Skelton J."/>
            <person name="Simmonds M.N."/>
            <person name="Squares R."/>
            <person name="Squares S."/>
            <person name="Stevens K."/>
            <person name="Taylor K."/>
            <person name="Taylor R.G."/>
            <person name="Tivey A."/>
            <person name="Walsh S.V."/>
            <person name="Warren T."/>
            <person name="Whitehead S."/>
            <person name="Woodward J.R."/>
            <person name="Volckaert G."/>
            <person name="Aert R."/>
            <person name="Robben J."/>
            <person name="Grymonprez B."/>
            <person name="Weltjens I."/>
            <person name="Vanstreels E."/>
            <person name="Rieger M."/>
            <person name="Schaefer M."/>
            <person name="Mueller-Auer S."/>
            <person name="Gabel C."/>
            <person name="Fuchs M."/>
            <person name="Duesterhoeft A."/>
            <person name="Fritzc C."/>
            <person name="Holzer E."/>
            <person name="Moestl D."/>
            <person name="Hilbert H."/>
            <person name="Borzym K."/>
            <person name="Langer I."/>
            <person name="Beck A."/>
            <person name="Lehrach H."/>
            <person name="Reinhardt R."/>
            <person name="Pohl T.M."/>
            <person name="Eger P."/>
            <person name="Zimmermann W."/>
            <person name="Wedler H."/>
            <person name="Wambutt R."/>
            <person name="Purnelle B."/>
            <person name="Goffeau A."/>
            <person name="Cadieu E."/>
            <person name="Dreano S."/>
            <person name="Gloux S."/>
            <person name="Lelaure V."/>
            <person name="Mottier S."/>
            <person name="Galibert F."/>
            <person name="Aves S.J."/>
            <person name="Xiang Z."/>
            <person name="Hunt C."/>
            <person name="Moore K."/>
            <person name="Hurst S.M."/>
            <person name="Lucas M."/>
            <person name="Rochet M."/>
            <person name="Gaillardin C."/>
            <person name="Tallada V.A."/>
            <person name="Garzon A."/>
            <person name="Thode G."/>
            <person name="Daga R.R."/>
            <person name="Cruzado L."/>
            <person name="Jimenez J."/>
            <person name="Sanchez M."/>
            <person name="del Rey F."/>
            <person name="Benito J."/>
            <person name="Dominguez A."/>
            <person name="Revuelta J.L."/>
            <person name="Moreno S."/>
            <person name="Armstrong J."/>
            <person name="Forsburg S.L."/>
            <person name="Cerutti L."/>
            <person name="Lowe T."/>
            <person name="McCombie W.R."/>
            <person name="Paulsen I."/>
            <person name="Potashkin J."/>
            <person name="Shpakovski G.V."/>
            <person name="Ussery D."/>
            <person name="Barrell B.G."/>
            <person name="Nurse P."/>
        </authorList>
    </citation>
    <scope>NUCLEOTIDE SEQUENCE [LARGE SCALE GENOMIC DNA]</scope>
    <source>
        <strain>972 / ATCC 24843</strain>
    </source>
</reference>
<reference key="3">
    <citation type="journal article" date="2011" name="Science">
        <title>Comparative functional genomics of the fission yeasts.</title>
        <authorList>
            <person name="Rhind N."/>
            <person name="Chen Z."/>
            <person name="Yassour M."/>
            <person name="Thompson D.A."/>
            <person name="Haas B.J."/>
            <person name="Habib N."/>
            <person name="Wapinski I."/>
            <person name="Roy S."/>
            <person name="Lin M.F."/>
            <person name="Heiman D.I."/>
            <person name="Young S.K."/>
            <person name="Furuya K."/>
            <person name="Guo Y."/>
            <person name="Pidoux A."/>
            <person name="Chen H.M."/>
            <person name="Robbertse B."/>
            <person name="Goldberg J.M."/>
            <person name="Aoki K."/>
            <person name="Bayne E.H."/>
            <person name="Berlin A.M."/>
            <person name="Desjardins C.A."/>
            <person name="Dobbs E."/>
            <person name="Dukaj L."/>
            <person name="Fan L."/>
            <person name="FitzGerald M.G."/>
            <person name="French C."/>
            <person name="Gujja S."/>
            <person name="Hansen K."/>
            <person name="Keifenheim D."/>
            <person name="Levin J.Z."/>
            <person name="Mosher R.A."/>
            <person name="Mueller C.A."/>
            <person name="Pfiffner J."/>
            <person name="Priest M."/>
            <person name="Russ C."/>
            <person name="Smialowska A."/>
            <person name="Swoboda P."/>
            <person name="Sykes S.M."/>
            <person name="Vaughn M."/>
            <person name="Vengrova S."/>
            <person name="Yoder R."/>
            <person name="Zeng Q."/>
            <person name="Allshire R."/>
            <person name="Baulcombe D."/>
            <person name="Birren B.W."/>
            <person name="Brown W."/>
            <person name="Ekwall K."/>
            <person name="Kellis M."/>
            <person name="Leatherwood J."/>
            <person name="Levin H."/>
            <person name="Margalit H."/>
            <person name="Martienssen R."/>
            <person name="Nieduszynski C.A."/>
            <person name="Spatafora J.W."/>
            <person name="Friedman N."/>
            <person name="Dalgaard J.Z."/>
            <person name="Baumann P."/>
            <person name="Niki H."/>
            <person name="Regev A."/>
            <person name="Nusbaum C."/>
        </authorList>
    </citation>
    <scope>REVISION OF GENE MODEL</scope>
</reference>
<reference key="4">
    <citation type="journal article" date="2000" name="J. Bacteriol.">
        <title>Trk1 and Trk2 define the major K(+) transport system in fission yeast.</title>
        <authorList>
            <person name="Calero F."/>
            <person name="Gomez N."/>
            <person name="Arino J."/>
            <person name="Ramos J."/>
        </authorList>
    </citation>
    <scope>FUNCTION</scope>
</reference>
<dbReference type="EMBL" id="AF266750">
    <property type="protein sequence ID" value="AAF74294.1"/>
    <property type="molecule type" value="mRNA"/>
</dbReference>
<dbReference type="EMBL" id="CU329670">
    <property type="protein sequence ID" value="CAB55290.3"/>
    <property type="status" value="ALT_SEQ"/>
    <property type="molecule type" value="Genomic_DNA"/>
</dbReference>
<dbReference type="PIR" id="T38083">
    <property type="entry name" value="T38083"/>
</dbReference>
<dbReference type="SMR" id="Q10065"/>
<dbReference type="FunCoup" id="Q10065">
    <property type="interactions" value="66"/>
</dbReference>
<dbReference type="STRING" id="284812.Q10065"/>
<dbReference type="GlyCosmos" id="Q10065">
    <property type="glycosylation" value="8 sites, No reported glycans"/>
</dbReference>
<dbReference type="PaxDb" id="4896-SPAC1639.02c.1"/>
<dbReference type="PomBase" id="SPAC1639.02c">
    <property type="gene designation" value="trk2"/>
</dbReference>
<dbReference type="eggNOG" id="KOG1341">
    <property type="taxonomic scope" value="Eukaryota"/>
</dbReference>
<dbReference type="HOGENOM" id="CLU_005947_0_1_1"/>
<dbReference type="InParanoid" id="Q10065"/>
<dbReference type="PhylomeDB" id="Q10065"/>
<dbReference type="PRO" id="PR:Q10065"/>
<dbReference type="Proteomes" id="UP000002485">
    <property type="component" value="Chromosome I"/>
</dbReference>
<dbReference type="GO" id="GO:0005886">
    <property type="term" value="C:plasma membrane"/>
    <property type="evidence" value="ECO:0000318"/>
    <property type="project" value="GO_Central"/>
</dbReference>
<dbReference type="GO" id="GO:0140107">
    <property type="term" value="F:high-affinity potassium ion transmembrane transporter activity"/>
    <property type="evidence" value="ECO:0000316"/>
    <property type="project" value="PomBase"/>
</dbReference>
<dbReference type="GO" id="GO:0071473">
    <property type="term" value="P:cellular response to cation stress"/>
    <property type="evidence" value="ECO:0000304"/>
    <property type="project" value="PomBase"/>
</dbReference>
<dbReference type="GO" id="GO:0030007">
    <property type="term" value="P:intracellular potassium ion homeostasis"/>
    <property type="evidence" value="ECO:0000318"/>
    <property type="project" value="GO_Central"/>
</dbReference>
<dbReference type="GO" id="GO:1990573">
    <property type="term" value="P:potassium ion import across plasma membrane"/>
    <property type="evidence" value="ECO:0000316"/>
    <property type="project" value="PomBase"/>
</dbReference>
<dbReference type="GO" id="GO:0042391">
    <property type="term" value="P:regulation of membrane potential"/>
    <property type="evidence" value="ECO:0000315"/>
    <property type="project" value="PomBase"/>
</dbReference>
<dbReference type="InterPro" id="IPR003445">
    <property type="entry name" value="Cat_transpt"/>
</dbReference>
<dbReference type="InterPro" id="IPR004773">
    <property type="entry name" value="K/Na_transp_Trk1/HKT1"/>
</dbReference>
<dbReference type="InterPro" id="IPR015958">
    <property type="entry name" value="Trk1_fungi"/>
</dbReference>
<dbReference type="InterPro" id="IPR051143">
    <property type="entry name" value="TrkH_K-transport"/>
</dbReference>
<dbReference type="NCBIfam" id="TIGR00934">
    <property type="entry name" value="2a38euk"/>
    <property type="match status" value="1"/>
</dbReference>
<dbReference type="PANTHER" id="PTHR31064:SF34">
    <property type="entry name" value="POTASSIUM TRANSPORT PROTEIN 2"/>
    <property type="match status" value="1"/>
</dbReference>
<dbReference type="PANTHER" id="PTHR31064">
    <property type="entry name" value="POTASSIUM TRANSPORT PROTEIN DDB_G0292412-RELATED"/>
    <property type="match status" value="1"/>
</dbReference>
<dbReference type="Pfam" id="PF02386">
    <property type="entry name" value="TrkH"/>
    <property type="match status" value="1"/>
</dbReference>
<dbReference type="PIRSF" id="PIRSF002450">
    <property type="entry name" value="K+_transpter_TRK"/>
    <property type="match status" value="1"/>
</dbReference>
<gene>
    <name type="primary">trk2</name>
    <name type="ORF">SPAC1639.02c</name>
    <name type="ORF">SPAC1F5.12</name>
</gene>